<reference key="1">
    <citation type="submission" date="2008-01" db="EMBL/GenBank/DDBJ databases">
        <title>Complete sequence of Thermoanaerobacter pseudethanolicus 39E.</title>
        <authorList>
            <person name="Copeland A."/>
            <person name="Lucas S."/>
            <person name="Lapidus A."/>
            <person name="Barry K."/>
            <person name="Glavina del Rio T."/>
            <person name="Dalin E."/>
            <person name="Tice H."/>
            <person name="Pitluck S."/>
            <person name="Bruce D."/>
            <person name="Goodwin L."/>
            <person name="Saunders E."/>
            <person name="Brettin T."/>
            <person name="Detter J.C."/>
            <person name="Han C."/>
            <person name="Schmutz J."/>
            <person name="Larimer F."/>
            <person name="Land M."/>
            <person name="Hauser L."/>
            <person name="Kyrpides N."/>
            <person name="Lykidis A."/>
            <person name="Hemme C."/>
            <person name="Fields M.W."/>
            <person name="He Z."/>
            <person name="Zhou J."/>
            <person name="Richardson P."/>
        </authorList>
    </citation>
    <scope>NUCLEOTIDE SEQUENCE [LARGE SCALE GENOMIC DNA]</scope>
    <source>
        <strain>ATCC 33223 / DSM 2355 / 39E</strain>
    </source>
</reference>
<gene>
    <name evidence="1" type="primary">rpsP</name>
    <name type="ordered locus">Teth39_1276</name>
</gene>
<keyword id="KW-1185">Reference proteome</keyword>
<keyword id="KW-0687">Ribonucleoprotein</keyword>
<keyword id="KW-0689">Ribosomal protein</keyword>
<sequence length="86" mass="9709">MAVRIRLKRFGAKKRPFYRIVVADSRSPRDGRFIDEIGYYNPIAQPAEIKIDVEKAKKWLSVGAQPSDTVKSLFKKEGIIGNSASQ</sequence>
<evidence type="ECO:0000255" key="1">
    <source>
        <dbReference type="HAMAP-Rule" id="MF_00385"/>
    </source>
</evidence>
<evidence type="ECO:0000305" key="2"/>
<name>RS16_THEP3</name>
<accession>B0K9W7</accession>
<dbReference type="EMBL" id="CP000924">
    <property type="protein sequence ID" value="ABY94930.1"/>
    <property type="molecule type" value="Genomic_DNA"/>
</dbReference>
<dbReference type="RefSeq" id="WP_003866679.1">
    <property type="nucleotide sequence ID" value="NC_010321.1"/>
</dbReference>
<dbReference type="SMR" id="B0K9W7"/>
<dbReference type="STRING" id="340099.Teth39_1276"/>
<dbReference type="KEGG" id="tpd:Teth39_1276"/>
<dbReference type="eggNOG" id="COG0228">
    <property type="taxonomic scope" value="Bacteria"/>
</dbReference>
<dbReference type="HOGENOM" id="CLU_100590_5_0_9"/>
<dbReference type="Proteomes" id="UP000002156">
    <property type="component" value="Chromosome"/>
</dbReference>
<dbReference type="GO" id="GO:0005737">
    <property type="term" value="C:cytoplasm"/>
    <property type="evidence" value="ECO:0007669"/>
    <property type="project" value="UniProtKB-ARBA"/>
</dbReference>
<dbReference type="GO" id="GO:0015935">
    <property type="term" value="C:small ribosomal subunit"/>
    <property type="evidence" value="ECO:0007669"/>
    <property type="project" value="TreeGrafter"/>
</dbReference>
<dbReference type="GO" id="GO:0003735">
    <property type="term" value="F:structural constituent of ribosome"/>
    <property type="evidence" value="ECO:0007669"/>
    <property type="project" value="InterPro"/>
</dbReference>
<dbReference type="GO" id="GO:0006412">
    <property type="term" value="P:translation"/>
    <property type="evidence" value="ECO:0007669"/>
    <property type="project" value="UniProtKB-UniRule"/>
</dbReference>
<dbReference type="FunFam" id="3.30.1320.10:FF:000002">
    <property type="entry name" value="30S ribosomal protein S16"/>
    <property type="match status" value="1"/>
</dbReference>
<dbReference type="Gene3D" id="3.30.1320.10">
    <property type="match status" value="1"/>
</dbReference>
<dbReference type="HAMAP" id="MF_00385">
    <property type="entry name" value="Ribosomal_bS16"/>
    <property type="match status" value="1"/>
</dbReference>
<dbReference type="InterPro" id="IPR000307">
    <property type="entry name" value="Ribosomal_bS16"/>
</dbReference>
<dbReference type="InterPro" id="IPR020592">
    <property type="entry name" value="Ribosomal_bS16_CS"/>
</dbReference>
<dbReference type="InterPro" id="IPR023803">
    <property type="entry name" value="Ribosomal_bS16_dom_sf"/>
</dbReference>
<dbReference type="NCBIfam" id="TIGR00002">
    <property type="entry name" value="S16"/>
    <property type="match status" value="1"/>
</dbReference>
<dbReference type="PANTHER" id="PTHR12919">
    <property type="entry name" value="30S RIBOSOMAL PROTEIN S16"/>
    <property type="match status" value="1"/>
</dbReference>
<dbReference type="PANTHER" id="PTHR12919:SF20">
    <property type="entry name" value="SMALL RIBOSOMAL SUBUNIT PROTEIN BS16M"/>
    <property type="match status" value="1"/>
</dbReference>
<dbReference type="Pfam" id="PF00886">
    <property type="entry name" value="Ribosomal_S16"/>
    <property type="match status" value="1"/>
</dbReference>
<dbReference type="SUPFAM" id="SSF54565">
    <property type="entry name" value="Ribosomal protein S16"/>
    <property type="match status" value="1"/>
</dbReference>
<dbReference type="PROSITE" id="PS00732">
    <property type="entry name" value="RIBOSOMAL_S16"/>
    <property type="match status" value="1"/>
</dbReference>
<protein>
    <recommendedName>
        <fullName evidence="1">Small ribosomal subunit protein bS16</fullName>
    </recommendedName>
    <alternativeName>
        <fullName evidence="2">30S ribosomal protein S16</fullName>
    </alternativeName>
</protein>
<organism>
    <name type="scientific">Thermoanaerobacter pseudethanolicus (strain ATCC 33223 / 39E)</name>
    <name type="common">Clostridium thermohydrosulfuricum</name>
    <dbReference type="NCBI Taxonomy" id="340099"/>
    <lineage>
        <taxon>Bacteria</taxon>
        <taxon>Bacillati</taxon>
        <taxon>Bacillota</taxon>
        <taxon>Clostridia</taxon>
        <taxon>Thermoanaerobacterales</taxon>
        <taxon>Thermoanaerobacteraceae</taxon>
        <taxon>Thermoanaerobacter</taxon>
    </lineage>
</organism>
<proteinExistence type="inferred from homology"/>
<comment type="similarity">
    <text evidence="1">Belongs to the bacterial ribosomal protein bS16 family.</text>
</comment>
<feature type="chain" id="PRO_1000196482" description="Small ribosomal subunit protein bS16">
    <location>
        <begin position="1"/>
        <end position="86"/>
    </location>
</feature>